<name>UBIG_RUEPO</name>
<accession>Q5LWM6</accession>
<protein>
    <recommendedName>
        <fullName evidence="1">Ubiquinone biosynthesis O-methyltransferase</fullName>
    </recommendedName>
    <alternativeName>
        <fullName evidence="1">2-polyprenyl-6-hydroxyphenol methylase</fullName>
        <ecNumber evidence="1">2.1.1.222</ecNumber>
    </alternativeName>
    <alternativeName>
        <fullName evidence="1">3-demethylubiquinone 3-O-methyltransferase</fullName>
        <ecNumber evidence="1">2.1.1.64</ecNumber>
    </alternativeName>
</protein>
<gene>
    <name evidence="1" type="primary">ubiG</name>
    <name type="ordered locus">SPO0067</name>
</gene>
<reference key="1">
    <citation type="journal article" date="2004" name="Nature">
        <title>Genome sequence of Silicibacter pomeroyi reveals adaptations to the marine environment.</title>
        <authorList>
            <person name="Moran M.A."/>
            <person name="Buchan A."/>
            <person name="Gonzalez J.M."/>
            <person name="Heidelberg J.F."/>
            <person name="Whitman W.B."/>
            <person name="Kiene R.P."/>
            <person name="Henriksen J.R."/>
            <person name="King G.M."/>
            <person name="Belas R."/>
            <person name="Fuqua C."/>
            <person name="Brinkac L.M."/>
            <person name="Lewis M."/>
            <person name="Johri S."/>
            <person name="Weaver B."/>
            <person name="Pai G."/>
            <person name="Eisen J.A."/>
            <person name="Rahe E."/>
            <person name="Sheldon W.M."/>
            <person name="Ye W."/>
            <person name="Miller T.R."/>
            <person name="Carlton J."/>
            <person name="Rasko D.A."/>
            <person name="Paulsen I.T."/>
            <person name="Ren Q."/>
            <person name="Daugherty S.C."/>
            <person name="DeBoy R.T."/>
            <person name="Dodson R.J."/>
            <person name="Durkin A.S."/>
            <person name="Madupu R."/>
            <person name="Nelson W.C."/>
            <person name="Sullivan S.A."/>
            <person name="Rosovitz M.J."/>
            <person name="Haft D.H."/>
            <person name="Selengut J."/>
            <person name="Ward N."/>
        </authorList>
    </citation>
    <scope>NUCLEOTIDE SEQUENCE [LARGE SCALE GENOMIC DNA]</scope>
    <source>
        <strain>ATCC 700808 / DSM 15171 / DSS-3</strain>
    </source>
</reference>
<reference key="2">
    <citation type="journal article" date="2014" name="Stand. Genomic Sci.">
        <title>An updated genome annotation for the model marine bacterium Ruegeria pomeroyi DSS-3.</title>
        <authorList>
            <person name="Rivers A.R."/>
            <person name="Smith C.B."/>
            <person name="Moran M.A."/>
        </authorList>
    </citation>
    <scope>GENOME REANNOTATION</scope>
    <source>
        <strain>ATCC 700808 / DSM 15171 / DSS-3</strain>
    </source>
</reference>
<feature type="chain" id="PRO_0000241739" description="Ubiquinone biosynthesis O-methyltransferase">
    <location>
        <begin position="1"/>
        <end position="248"/>
    </location>
</feature>
<feature type="binding site" evidence="1">
    <location>
        <position position="40"/>
    </location>
    <ligand>
        <name>S-adenosyl-L-methionine</name>
        <dbReference type="ChEBI" id="CHEBI:59789"/>
    </ligand>
</feature>
<feature type="binding site" evidence="1">
    <location>
        <position position="71"/>
    </location>
    <ligand>
        <name>S-adenosyl-L-methionine</name>
        <dbReference type="ChEBI" id="CHEBI:59789"/>
    </ligand>
</feature>
<feature type="binding site" evidence="1">
    <location>
        <position position="92"/>
    </location>
    <ligand>
        <name>S-adenosyl-L-methionine</name>
        <dbReference type="ChEBI" id="CHEBI:59789"/>
    </ligand>
</feature>
<feature type="binding site" evidence="1">
    <location>
        <position position="135"/>
    </location>
    <ligand>
        <name>S-adenosyl-L-methionine</name>
        <dbReference type="ChEBI" id="CHEBI:59789"/>
    </ligand>
</feature>
<keyword id="KW-0489">Methyltransferase</keyword>
<keyword id="KW-1185">Reference proteome</keyword>
<keyword id="KW-0949">S-adenosyl-L-methionine</keyword>
<keyword id="KW-0808">Transferase</keyword>
<keyword id="KW-0831">Ubiquinone biosynthesis</keyword>
<proteinExistence type="inferred from homology"/>
<dbReference type="EC" id="2.1.1.222" evidence="1"/>
<dbReference type="EC" id="2.1.1.64" evidence="1"/>
<dbReference type="EMBL" id="CP000031">
    <property type="protein sequence ID" value="AAV93398.1"/>
    <property type="molecule type" value="Genomic_DNA"/>
</dbReference>
<dbReference type="RefSeq" id="WP_011045840.1">
    <property type="nucleotide sequence ID" value="NC_003911.12"/>
</dbReference>
<dbReference type="SMR" id="Q5LWM6"/>
<dbReference type="STRING" id="246200.SPO0067"/>
<dbReference type="PaxDb" id="246200-SPO0067"/>
<dbReference type="KEGG" id="sil:SPO0067"/>
<dbReference type="eggNOG" id="COG2227">
    <property type="taxonomic scope" value="Bacteria"/>
</dbReference>
<dbReference type="HOGENOM" id="CLU_042432_2_1_5"/>
<dbReference type="OrthoDB" id="9801538at2"/>
<dbReference type="UniPathway" id="UPA00232"/>
<dbReference type="Proteomes" id="UP000001023">
    <property type="component" value="Chromosome"/>
</dbReference>
<dbReference type="GO" id="GO:0102208">
    <property type="term" value="F:2-polyprenyl-6-hydroxyphenol methylase activity"/>
    <property type="evidence" value="ECO:0007669"/>
    <property type="project" value="UniProtKB-EC"/>
</dbReference>
<dbReference type="GO" id="GO:0061542">
    <property type="term" value="F:3-demethylubiquinol 3-O-methyltransferase activity"/>
    <property type="evidence" value="ECO:0007669"/>
    <property type="project" value="UniProtKB-UniRule"/>
</dbReference>
<dbReference type="GO" id="GO:0010420">
    <property type="term" value="F:polyprenyldihydroxybenzoate methyltransferase activity"/>
    <property type="evidence" value="ECO:0007669"/>
    <property type="project" value="InterPro"/>
</dbReference>
<dbReference type="GO" id="GO:0032259">
    <property type="term" value="P:methylation"/>
    <property type="evidence" value="ECO:0007669"/>
    <property type="project" value="UniProtKB-KW"/>
</dbReference>
<dbReference type="CDD" id="cd02440">
    <property type="entry name" value="AdoMet_MTases"/>
    <property type="match status" value="1"/>
</dbReference>
<dbReference type="Gene3D" id="3.40.50.150">
    <property type="entry name" value="Vaccinia Virus protein VP39"/>
    <property type="match status" value="1"/>
</dbReference>
<dbReference type="HAMAP" id="MF_00472">
    <property type="entry name" value="UbiG"/>
    <property type="match status" value="1"/>
</dbReference>
<dbReference type="InterPro" id="IPR029063">
    <property type="entry name" value="SAM-dependent_MTases_sf"/>
</dbReference>
<dbReference type="InterPro" id="IPR010233">
    <property type="entry name" value="UbiG_MeTrfase"/>
</dbReference>
<dbReference type="NCBIfam" id="TIGR01983">
    <property type="entry name" value="UbiG"/>
    <property type="match status" value="1"/>
</dbReference>
<dbReference type="PANTHER" id="PTHR43464">
    <property type="entry name" value="METHYLTRANSFERASE"/>
    <property type="match status" value="1"/>
</dbReference>
<dbReference type="PANTHER" id="PTHR43464:SF19">
    <property type="entry name" value="UBIQUINONE BIOSYNTHESIS O-METHYLTRANSFERASE, MITOCHONDRIAL"/>
    <property type="match status" value="1"/>
</dbReference>
<dbReference type="Pfam" id="PF13489">
    <property type="entry name" value="Methyltransf_23"/>
    <property type="match status" value="1"/>
</dbReference>
<dbReference type="SUPFAM" id="SSF53335">
    <property type="entry name" value="S-adenosyl-L-methionine-dependent methyltransferases"/>
    <property type="match status" value="1"/>
</dbReference>
<comment type="function">
    <text evidence="1">O-methyltransferase that catalyzes the 2 O-methylation steps in the ubiquinone biosynthetic pathway.</text>
</comment>
<comment type="catalytic activity">
    <reaction evidence="1">
        <text>a 3-demethylubiquinol + S-adenosyl-L-methionine = a ubiquinol + S-adenosyl-L-homocysteine + H(+)</text>
        <dbReference type="Rhea" id="RHEA:44380"/>
        <dbReference type="Rhea" id="RHEA-COMP:9566"/>
        <dbReference type="Rhea" id="RHEA-COMP:10914"/>
        <dbReference type="ChEBI" id="CHEBI:15378"/>
        <dbReference type="ChEBI" id="CHEBI:17976"/>
        <dbReference type="ChEBI" id="CHEBI:57856"/>
        <dbReference type="ChEBI" id="CHEBI:59789"/>
        <dbReference type="ChEBI" id="CHEBI:84422"/>
        <dbReference type="EC" id="2.1.1.64"/>
    </reaction>
</comment>
<comment type="catalytic activity">
    <reaction evidence="1">
        <text>a 3-(all-trans-polyprenyl)benzene-1,2-diol + S-adenosyl-L-methionine = a 2-methoxy-6-(all-trans-polyprenyl)phenol + S-adenosyl-L-homocysteine + H(+)</text>
        <dbReference type="Rhea" id="RHEA:31411"/>
        <dbReference type="Rhea" id="RHEA-COMP:9550"/>
        <dbReference type="Rhea" id="RHEA-COMP:9551"/>
        <dbReference type="ChEBI" id="CHEBI:15378"/>
        <dbReference type="ChEBI" id="CHEBI:57856"/>
        <dbReference type="ChEBI" id="CHEBI:59789"/>
        <dbReference type="ChEBI" id="CHEBI:62729"/>
        <dbReference type="ChEBI" id="CHEBI:62731"/>
        <dbReference type="EC" id="2.1.1.222"/>
    </reaction>
</comment>
<comment type="pathway">
    <text evidence="1">Cofactor biosynthesis; ubiquinone biosynthesis.</text>
</comment>
<comment type="similarity">
    <text evidence="1">Belongs to the methyltransferase superfamily. UbiG/COQ3 family.</text>
</comment>
<organism>
    <name type="scientific">Ruegeria pomeroyi (strain ATCC 700808 / DSM 15171 / DSS-3)</name>
    <name type="common">Silicibacter pomeroyi</name>
    <dbReference type="NCBI Taxonomy" id="246200"/>
    <lineage>
        <taxon>Bacteria</taxon>
        <taxon>Pseudomonadati</taxon>
        <taxon>Pseudomonadota</taxon>
        <taxon>Alphaproteobacteria</taxon>
        <taxon>Rhodobacterales</taxon>
        <taxon>Roseobacteraceae</taxon>
        <taxon>Ruegeria</taxon>
    </lineage>
</organism>
<sequence length="248" mass="27614">MQAHPNTVDPSEIAKFEAMAAEWWDPHGKFKPLHMLNPCRLDYITRQIAGEFDRDLGTERPFAGLRLLDIGCGGGLLSEPMARLGAEVVGADAAEGNLPVARIHAEQSGLEIDYRHTTAEALAEAGEQFDVVLNMEVVEHVADPLSYLRATHDLLKPGGLQICSTINRNPKSYAMAILGAEVVMRWLPRGTHDWSKFITPDELFDLLRQAGLEPVDRKGFVFNPISWQWSISDRDLSVNYVTASLRPR</sequence>
<evidence type="ECO:0000255" key="1">
    <source>
        <dbReference type="HAMAP-Rule" id="MF_00472"/>
    </source>
</evidence>